<sequence>MAATGVDKDRPRAMTSTTYLGLLLVGIQVLGFVAAIHAVLTVRTAQGAIAWATSLVFMPYLTLLPYLVFGRSRFDAYIEARRQANREMHLAAAELDWRPWVEEALAARQVSGYKGLKALVRMTRTPTLANNRVRLLVNGEASFEAMFKAISAARQVILVQFFIVRDDALGQRLQQLLLERAANGVEVFFLYDAIGSHALPHRYVERLRQGGVQMHGFSTGSGMLNRFQVNFRNHRKVVVVDGECGFVGGHNVGVEYLGEKPPLAPWRDTHMELRGPAVACLQESFAEDWYWATHSLPPLILPPQYDSEGALCQVVASGPADAQETCSLFFVEMINAAHERVWITSPYFVPDEAVMAALRLAVLRGVDVRLLIPSRPDHRTVYAASSLYALEAIRAGVKVFRYQPGFLHQKVVLVDRDTAAVGSANLDNRSFRLNFEVMVVTVDEGFAGEVEAMLEADFAESLEFTPEDRRSVRRLQQLGMRVARLVSPIL</sequence>
<evidence type="ECO:0000255" key="1">
    <source>
        <dbReference type="HAMAP-Rule" id="MF_00190"/>
    </source>
</evidence>
<reference key="1">
    <citation type="journal article" date="2006" name="Genome Biol.">
        <title>Genomic analysis reveals that Pseudomonas aeruginosa virulence is combinatorial.</title>
        <authorList>
            <person name="Lee D.G."/>
            <person name="Urbach J.M."/>
            <person name="Wu G."/>
            <person name="Liberati N.T."/>
            <person name="Feinbaum R.L."/>
            <person name="Miyata S."/>
            <person name="Diggins L.T."/>
            <person name="He J."/>
            <person name="Saucier M."/>
            <person name="Deziel E."/>
            <person name="Friedman L."/>
            <person name="Li L."/>
            <person name="Grills G."/>
            <person name="Montgomery K."/>
            <person name="Kucherlapati R."/>
            <person name="Rahme L.G."/>
            <person name="Ausubel F.M."/>
        </authorList>
    </citation>
    <scope>NUCLEOTIDE SEQUENCE [LARGE SCALE GENOMIC DNA]</scope>
    <source>
        <strain>UCBPP-PA14</strain>
    </source>
</reference>
<gene>
    <name evidence="1" type="primary">clsA</name>
    <name type="synonym">cls</name>
    <name type="ordered locus">PA14_71220</name>
</gene>
<keyword id="KW-0997">Cell inner membrane</keyword>
<keyword id="KW-1003">Cell membrane</keyword>
<keyword id="KW-0444">Lipid biosynthesis</keyword>
<keyword id="KW-0443">Lipid metabolism</keyword>
<keyword id="KW-0472">Membrane</keyword>
<keyword id="KW-0594">Phospholipid biosynthesis</keyword>
<keyword id="KW-1208">Phospholipid metabolism</keyword>
<keyword id="KW-0677">Repeat</keyword>
<keyword id="KW-0808">Transferase</keyword>
<keyword id="KW-0812">Transmembrane</keyword>
<keyword id="KW-1133">Transmembrane helix</keyword>
<dbReference type="EC" id="2.7.8.-" evidence="1"/>
<dbReference type="EMBL" id="CP000438">
    <property type="protein sequence ID" value="ABJ14777.1"/>
    <property type="molecule type" value="Genomic_DNA"/>
</dbReference>
<dbReference type="RefSeq" id="WP_003121332.1">
    <property type="nucleotide sequence ID" value="NZ_CP034244.1"/>
</dbReference>
<dbReference type="SMR" id="Q02DW8"/>
<dbReference type="KEGG" id="pau:PA14_71220"/>
<dbReference type="PseudoCAP" id="PA14_71220"/>
<dbReference type="HOGENOM" id="CLU_038053_1_0_6"/>
<dbReference type="BioCyc" id="PAER208963:G1G74-5994-MONOMER"/>
<dbReference type="Proteomes" id="UP000000653">
    <property type="component" value="Chromosome"/>
</dbReference>
<dbReference type="GO" id="GO:0005886">
    <property type="term" value="C:plasma membrane"/>
    <property type="evidence" value="ECO:0007669"/>
    <property type="project" value="UniProtKB-SubCell"/>
</dbReference>
<dbReference type="GO" id="GO:0008808">
    <property type="term" value="F:cardiolipin synthase activity"/>
    <property type="evidence" value="ECO:0007669"/>
    <property type="project" value="InterPro"/>
</dbReference>
<dbReference type="GO" id="GO:0032049">
    <property type="term" value="P:cardiolipin biosynthetic process"/>
    <property type="evidence" value="ECO:0007669"/>
    <property type="project" value="InterPro"/>
</dbReference>
<dbReference type="CDD" id="cd09155">
    <property type="entry name" value="PLDc_PaCLS_like_1"/>
    <property type="match status" value="1"/>
</dbReference>
<dbReference type="CDD" id="cd09161">
    <property type="entry name" value="PLDc_PaCLS_like_2"/>
    <property type="match status" value="1"/>
</dbReference>
<dbReference type="FunFam" id="3.30.870.10:FF:000014">
    <property type="entry name" value="Cardiolipin synthase"/>
    <property type="match status" value="1"/>
</dbReference>
<dbReference type="FunFam" id="3.30.870.10:FF:000021">
    <property type="entry name" value="Cardiolipin synthase"/>
    <property type="match status" value="1"/>
</dbReference>
<dbReference type="Gene3D" id="3.30.870.10">
    <property type="entry name" value="Endonuclease Chain A"/>
    <property type="match status" value="2"/>
</dbReference>
<dbReference type="HAMAP" id="MF_00190">
    <property type="entry name" value="Cardiolipin_synth_ClsA"/>
    <property type="match status" value="1"/>
</dbReference>
<dbReference type="InterPro" id="IPR022924">
    <property type="entry name" value="Cardiolipin_synthase"/>
</dbReference>
<dbReference type="InterPro" id="IPR030840">
    <property type="entry name" value="CL_synthase_A"/>
</dbReference>
<dbReference type="InterPro" id="IPR025202">
    <property type="entry name" value="PLD-like_dom"/>
</dbReference>
<dbReference type="InterPro" id="IPR001736">
    <property type="entry name" value="PLipase_D/transphosphatidylase"/>
</dbReference>
<dbReference type="NCBIfam" id="TIGR04265">
    <property type="entry name" value="bac_cardiolipin"/>
    <property type="match status" value="1"/>
</dbReference>
<dbReference type="PANTHER" id="PTHR21248">
    <property type="entry name" value="CARDIOLIPIN SYNTHASE"/>
    <property type="match status" value="1"/>
</dbReference>
<dbReference type="PANTHER" id="PTHR21248:SF22">
    <property type="entry name" value="PHOSPHOLIPASE D"/>
    <property type="match status" value="1"/>
</dbReference>
<dbReference type="Pfam" id="PF13091">
    <property type="entry name" value="PLDc_2"/>
    <property type="match status" value="1"/>
</dbReference>
<dbReference type="SMART" id="SM00155">
    <property type="entry name" value="PLDc"/>
    <property type="match status" value="2"/>
</dbReference>
<dbReference type="SUPFAM" id="SSF56024">
    <property type="entry name" value="Phospholipase D/nuclease"/>
    <property type="match status" value="2"/>
</dbReference>
<dbReference type="PROSITE" id="PS50035">
    <property type="entry name" value="PLD"/>
    <property type="match status" value="2"/>
</dbReference>
<name>CLSA_PSEAB</name>
<proteinExistence type="inferred from homology"/>
<organism>
    <name type="scientific">Pseudomonas aeruginosa (strain UCBPP-PA14)</name>
    <dbReference type="NCBI Taxonomy" id="208963"/>
    <lineage>
        <taxon>Bacteria</taxon>
        <taxon>Pseudomonadati</taxon>
        <taxon>Pseudomonadota</taxon>
        <taxon>Gammaproteobacteria</taxon>
        <taxon>Pseudomonadales</taxon>
        <taxon>Pseudomonadaceae</taxon>
        <taxon>Pseudomonas</taxon>
    </lineage>
</organism>
<feature type="chain" id="PRO_1000077500" description="Cardiolipin synthase A">
    <location>
        <begin position="1"/>
        <end position="490"/>
    </location>
</feature>
<feature type="transmembrane region" description="Helical" evidence="1">
    <location>
        <begin position="20"/>
        <end position="40"/>
    </location>
</feature>
<feature type="transmembrane region" description="Helical" evidence="1">
    <location>
        <begin position="49"/>
        <end position="69"/>
    </location>
</feature>
<feature type="domain" description="PLD phosphodiesterase 1" evidence="1">
    <location>
        <begin position="229"/>
        <end position="256"/>
    </location>
</feature>
<feature type="domain" description="PLD phosphodiesterase 2" evidence="1">
    <location>
        <begin position="403"/>
        <end position="430"/>
    </location>
</feature>
<feature type="active site" evidence="1">
    <location>
        <position position="234"/>
    </location>
</feature>
<feature type="active site" evidence="1">
    <location>
        <position position="236"/>
    </location>
</feature>
<feature type="active site" evidence="1">
    <location>
        <position position="241"/>
    </location>
</feature>
<feature type="active site" evidence="1">
    <location>
        <position position="408"/>
    </location>
</feature>
<feature type="active site" evidence="1">
    <location>
        <position position="410"/>
    </location>
</feature>
<feature type="active site" evidence="1">
    <location>
        <position position="415"/>
    </location>
</feature>
<accession>Q02DW8</accession>
<protein>
    <recommendedName>
        <fullName evidence="1">Cardiolipin synthase A</fullName>
        <shortName evidence="1">CL synthase</shortName>
        <ecNumber evidence="1">2.7.8.-</ecNumber>
    </recommendedName>
</protein>
<comment type="function">
    <text evidence="1">Catalyzes the reversible phosphatidyl group transfer from one phosphatidylglycerol molecule to another to form cardiolipin (CL) (diphosphatidylglycerol) and glycerol.</text>
</comment>
<comment type="catalytic activity">
    <reaction evidence="1">
        <text>2 a 1,2-diacyl-sn-glycero-3-phospho-(1'-sn-glycerol) = a cardiolipin + glycerol</text>
        <dbReference type="Rhea" id="RHEA:31451"/>
        <dbReference type="ChEBI" id="CHEBI:17754"/>
        <dbReference type="ChEBI" id="CHEBI:62237"/>
        <dbReference type="ChEBI" id="CHEBI:64716"/>
    </reaction>
</comment>
<comment type="subcellular location">
    <subcellularLocation>
        <location evidence="1">Cell inner membrane</location>
        <topology evidence="1">Multi-pass membrane protein</topology>
    </subcellularLocation>
</comment>
<comment type="similarity">
    <text evidence="1">Belongs to the phospholipase D family. Cardiolipin synthase subfamily. ClsA sub-subfamily.</text>
</comment>